<reference key="1">
    <citation type="submission" date="2000-10" db="EMBL/GenBank/DDBJ databases">
        <title>b6f complex of Anabaena variabilis.</title>
        <authorList>
            <person name="Arnold M."/>
        </authorList>
    </citation>
    <scope>NUCLEOTIDE SEQUENCE [GENOMIC DNA]</scope>
    <source>
        <strain>FD</strain>
    </source>
</reference>
<reference key="2">
    <citation type="journal article" date="2014" name="Stand. Genomic Sci.">
        <title>Complete genome sequence of Anabaena variabilis ATCC 29413.</title>
        <authorList>
            <person name="Thiel T."/>
            <person name="Pratte B.S."/>
            <person name="Zhong J."/>
            <person name="Goodwin L."/>
            <person name="Copeland A."/>
            <person name="Lucas S."/>
            <person name="Han C."/>
            <person name="Pitluck S."/>
            <person name="Land M.L."/>
            <person name="Kyrpides N.C."/>
            <person name="Woyke T."/>
        </authorList>
    </citation>
    <scope>NUCLEOTIDE SEQUENCE [LARGE SCALE GENOMIC DNA]</scope>
    <source>
        <strain>ATCC 29413 / PCC 7937</strain>
    </source>
</reference>
<dbReference type="EC" id="7.1.1.6" evidence="1"/>
<dbReference type="EMBL" id="AJ271819">
    <property type="protein sequence ID" value="CAB72244.1"/>
    <property type="molecule type" value="Genomic_DNA"/>
</dbReference>
<dbReference type="EMBL" id="CP000117">
    <property type="protein sequence ID" value="ABA20011.1"/>
    <property type="molecule type" value="Genomic_DNA"/>
</dbReference>
<dbReference type="SMR" id="Q9L3P9"/>
<dbReference type="STRING" id="240292.Ava_0385"/>
<dbReference type="KEGG" id="ava:Ava_0385"/>
<dbReference type="eggNOG" id="COG0723">
    <property type="taxonomic scope" value="Bacteria"/>
</dbReference>
<dbReference type="HOGENOM" id="CLU_055690_8_0_3"/>
<dbReference type="Proteomes" id="UP000002533">
    <property type="component" value="Chromosome"/>
</dbReference>
<dbReference type="GO" id="GO:0031676">
    <property type="term" value="C:plasma membrane-derived thylakoid membrane"/>
    <property type="evidence" value="ECO:0007669"/>
    <property type="project" value="UniProtKB-SubCell"/>
</dbReference>
<dbReference type="GO" id="GO:0051537">
    <property type="term" value="F:2 iron, 2 sulfur cluster binding"/>
    <property type="evidence" value="ECO:0007669"/>
    <property type="project" value="UniProtKB-KW"/>
</dbReference>
<dbReference type="GO" id="GO:0045158">
    <property type="term" value="F:electron transporter, transferring electrons within cytochrome b6/f complex of photosystem II activity"/>
    <property type="evidence" value="ECO:0007669"/>
    <property type="project" value="UniProtKB-UniRule"/>
</dbReference>
<dbReference type="GO" id="GO:0046872">
    <property type="term" value="F:metal ion binding"/>
    <property type="evidence" value="ECO:0007669"/>
    <property type="project" value="UniProtKB-KW"/>
</dbReference>
<dbReference type="GO" id="GO:0004497">
    <property type="term" value="F:monooxygenase activity"/>
    <property type="evidence" value="ECO:0007669"/>
    <property type="project" value="UniProtKB-ARBA"/>
</dbReference>
<dbReference type="GO" id="GO:0016705">
    <property type="term" value="F:oxidoreductase activity, acting on paired donors, with incorporation or reduction of molecular oxygen"/>
    <property type="evidence" value="ECO:0007669"/>
    <property type="project" value="UniProtKB-ARBA"/>
</dbReference>
<dbReference type="GO" id="GO:0009496">
    <property type="term" value="F:plastoquinol--plastocyanin reductase activity"/>
    <property type="evidence" value="ECO:0007669"/>
    <property type="project" value="UniProtKB-UniRule"/>
</dbReference>
<dbReference type="GO" id="GO:0015979">
    <property type="term" value="P:photosynthesis"/>
    <property type="evidence" value="ECO:0007669"/>
    <property type="project" value="UniProtKB-UniRule"/>
</dbReference>
<dbReference type="CDD" id="cd03471">
    <property type="entry name" value="Rieske_cytochrome_b6f"/>
    <property type="match status" value="1"/>
</dbReference>
<dbReference type="FunFam" id="2.102.10.10:FF:000007">
    <property type="entry name" value="Cytochrome b6-f complex iron-sulfur subunit"/>
    <property type="match status" value="1"/>
</dbReference>
<dbReference type="Gene3D" id="2.102.10.10">
    <property type="entry name" value="Rieske [2Fe-2S] iron-sulphur domain"/>
    <property type="match status" value="1"/>
</dbReference>
<dbReference type="Gene3D" id="1.20.5.700">
    <property type="entry name" value="Single helix bin"/>
    <property type="match status" value="1"/>
</dbReference>
<dbReference type="HAMAP" id="MF_01335">
    <property type="entry name" value="Cytb6_f_Rieske"/>
    <property type="match status" value="1"/>
</dbReference>
<dbReference type="InterPro" id="IPR023960">
    <property type="entry name" value="Cyt_b6_f_Rieske"/>
</dbReference>
<dbReference type="InterPro" id="IPR017941">
    <property type="entry name" value="Rieske_2Fe-2S"/>
</dbReference>
<dbReference type="InterPro" id="IPR036922">
    <property type="entry name" value="Rieske_2Fe-2S_sf"/>
</dbReference>
<dbReference type="InterPro" id="IPR014349">
    <property type="entry name" value="Rieske_Fe-S_prot"/>
</dbReference>
<dbReference type="InterPro" id="IPR005805">
    <property type="entry name" value="Rieske_Fe-S_prot_C"/>
</dbReference>
<dbReference type="NCBIfam" id="NF045928">
    <property type="entry name" value="Cytb6fFeSPetC"/>
    <property type="match status" value="1"/>
</dbReference>
<dbReference type="NCBIfam" id="NF010001">
    <property type="entry name" value="PRK13474.1"/>
    <property type="match status" value="1"/>
</dbReference>
<dbReference type="PANTHER" id="PTHR10134">
    <property type="entry name" value="CYTOCHROME B-C1 COMPLEX SUBUNIT RIESKE, MITOCHONDRIAL"/>
    <property type="match status" value="1"/>
</dbReference>
<dbReference type="Pfam" id="PF00355">
    <property type="entry name" value="Rieske"/>
    <property type="match status" value="1"/>
</dbReference>
<dbReference type="Pfam" id="PF25471">
    <property type="entry name" value="TM_PetC"/>
    <property type="match status" value="1"/>
</dbReference>
<dbReference type="PRINTS" id="PR00162">
    <property type="entry name" value="RIESKE"/>
</dbReference>
<dbReference type="SUPFAM" id="SSF50022">
    <property type="entry name" value="ISP domain"/>
    <property type="match status" value="1"/>
</dbReference>
<dbReference type="PROSITE" id="PS51296">
    <property type="entry name" value="RIESKE"/>
    <property type="match status" value="1"/>
</dbReference>
<evidence type="ECO:0000255" key="1">
    <source>
        <dbReference type="HAMAP-Rule" id="MF_01335"/>
    </source>
</evidence>
<gene>
    <name evidence="1" type="primary">petC</name>
    <name type="ordered locus">Ava_0385</name>
</gene>
<accession>Q9L3P9</accession>
<accession>Q3MG75</accession>
<name>UCRIA_TRIV2</name>
<keyword id="KW-0001">2Fe-2S</keyword>
<keyword id="KW-1015">Disulfide bond</keyword>
<keyword id="KW-0249">Electron transport</keyword>
<keyword id="KW-0408">Iron</keyword>
<keyword id="KW-0411">Iron-sulfur</keyword>
<keyword id="KW-0472">Membrane</keyword>
<keyword id="KW-0479">Metal-binding</keyword>
<keyword id="KW-0793">Thylakoid</keyword>
<keyword id="KW-1278">Translocase</keyword>
<keyword id="KW-0812">Transmembrane</keyword>
<keyword id="KW-1133">Transmembrane helix</keyword>
<keyword id="KW-0813">Transport</keyword>
<sequence>MAQFSESVDVPDMGRRQFMNLLTFGTVTGVALGALYPVVNYFIPPATGGAGGGTTAKDELGNDVSVSKFLESHNVGDRTLVQGLKGDPTYIVVESKEAITDYGINAVCTHLGCVVPWNAAENKFKCPCHGSQYDATGKVVRGPAPKSLALSHAKTENDKIVLTPWTETDFRTGEEPWWS</sequence>
<comment type="function">
    <text evidence="1">Component of the cytochrome b6-f complex, which mediates electron transfer between photosystem II (PSII) and photosystem I (PSI), cyclic electron flow around PSI, and state transitions.</text>
</comment>
<comment type="catalytic activity">
    <reaction evidence="1">
        <text>2 oxidized [plastocyanin] + a plastoquinol + 2 H(+)(in) = 2 reduced [plastocyanin] + a plastoquinone + 4 H(+)(out)</text>
        <dbReference type="Rhea" id="RHEA:22148"/>
        <dbReference type="Rhea" id="RHEA-COMP:9561"/>
        <dbReference type="Rhea" id="RHEA-COMP:9562"/>
        <dbReference type="Rhea" id="RHEA-COMP:10039"/>
        <dbReference type="Rhea" id="RHEA-COMP:10040"/>
        <dbReference type="ChEBI" id="CHEBI:15378"/>
        <dbReference type="ChEBI" id="CHEBI:17757"/>
        <dbReference type="ChEBI" id="CHEBI:29036"/>
        <dbReference type="ChEBI" id="CHEBI:49552"/>
        <dbReference type="ChEBI" id="CHEBI:62192"/>
        <dbReference type="EC" id="7.1.1.6"/>
    </reaction>
</comment>
<comment type="cofactor">
    <cofactor evidence="1">
        <name>[2Fe-2S] cluster</name>
        <dbReference type="ChEBI" id="CHEBI:190135"/>
    </cofactor>
    <text evidence="1">Binds 1 [2Fe-2S] cluster per subunit.</text>
</comment>
<comment type="subunit">
    <text evidence="1">The 4 large subunits of the cytochrome b6-f complex are cytochrome b6, subunit IV (17 kDa polypeptide, PetD), cytochrome f and the Rieske protein, while the 4 small subunits are PetG, PetL, PetM and PetN. The complex functions as a dimer.</text>
</comment>
<comment type="subcellular location">
    <subcellularLocation>
        <location evidence="1">Cellular thylakoid membrane</location>
        <topology evidence="1">Single-pass membrane protein</topology>
    </subcellularLocation>
    <text evidence="1">The transmembrane helix obliquely spans the membrane in one monomer, and its extrinsic C-terminal domain is part of the other monomer.</text>
</comment>
<comment type="miscellaneous">
    <text>The Rieske iron-sulfur protein is a high potential 2Fe-2S protein.</text>
</comment>
<comment type="similarity">
    <text evidence="1">Belongs to the Rieske iron-sulfur protein family.</text>
</comment>
<feature type="chain" id="PRO_0000127770" description="Cytochrome b6-f complex iron-sulfur subunit 1">
    <location>
        <begin position="1"/>
        <end position="179"/>
    </location>
</feature>
<feature type="transmembrane region" description="Helical" evidence="1">
    <location>
        <begin position="21"/>
        <end position="43"/>
    </location>
</feature>
<feature type="domain" description="Rieske" evidence="1">
    <location>
        <begin position="61"/>
        <end position="162"/>
    </location>
</feature>
<feature type="binding site" evidence="1">
    <location>
        <position position="108"/>
    </location>
    <ligand>
        <name>[2Fe-2S] cluster</name>
        <dbReference type="ChEBI" id="CHEBI:190135"/>
    </ligand>
</feature>
<feature type="binding site" evidence="1">
    <location>
        <position position="110"/>
    </location>
    <ligand>
        <name>[2Fe-2S] cluster</name>
        <dbReference type="ChEBI" id="CHEBI:190135"/>
    </ligand>
</feature>
<feature type="binding site" evidence="1">
    <location>
        <position position="126"/>
    </location>
    <ligand>
        <name>[2Fe-2S] cluster</name>
        <dbReference type="ChEBI" id="CHEBI:190135"/>
    </ligand>
</feature>
<feature type="binding site" evidence="1">
    <location>
        <position position="129"/>
    </location>
    <ligand>
        <name>[2Fe-2S] cluster</name>
        <dbReference type="ChEBI" id="CHEBI:190135"/>
    </ligand>
</feature>
<feature type="disulfide bond" evidence="1">
    <location>
        <begin position="113"/>
        <end position="128"/>
    </location>
</feature>
<organism>
    <name type="scientific">Trichormus variabilis (strain ATCC 29413 / PCC 7937)</name>
    <name type="common">Anabaena variabilis</name>
    <dbReference type="NCBI Taxonomy" id="240292"/>
    <lineage>
        <taxon>Bacteria</taxon>
        <taxon>Bacillati</taxon>
        <taxon>Cyanobacteriota</taxon>
        <taxon>Cyanophyceae</taxon>
        <taxon>Nostocales</taxon>
        <taxon>Nostocaceae</taxon>
        <taxon>Trichormus</taxon>
    </lineage>
</organism>
<protein>
    <recommendedName>
        <fullName evidence="1">Cytochrome b6-f complex iron-sulfur subunit 1</fullName>
        <ecNumber evidence="1">7.1.1.6</ecNumber>
    </recommendedName>
    <alternativeName>
        <fullName evidence="1">Plastohydroquinone:plastocyanin oxidoreductase iron-sulfur protein</fullName>
        <shortName evidence="1">ISP</shortName>
        <shortName evidence="1">RISP</shortName>
    </alternativeName>
    <alternativeName>
        <fullName evidence="1">Rieske iron-sulfur protein</fullName>
    </alternativeName>
</protein>
<proteinExistence type="inferred from homology"/>